<comment type="function">
    <text evidence="1">DNA-dependent RNA polymerase catalyzes the transcription of DNA into RNA using the four ribonucleoside triphosphates as substrates.</text>
</comment>
<comment type="catalytic activity">
    <reaction evidence="1">
        <text>RNA(n) + a ribonucleoside 5'-triphosphate = RNA(n+1) + diphosphate</text>
        <dbReference type="Rhea" id="RHEA:21248"/>
        <dbReference type="Rhea" id="RHEA-COMP:14527"/>
        <dbReference type="Rhea" id="RHEA-COMP:17342"/>
        <dbReference type="ChEBI" id="CHEBI:33019"/>
        <dbReference type="ChEBI" id="CHEBI:61557"/>
        <dbReference type="ChEBI" id="CHEBI:140395"/>
        <dbReference type="EC" id="2.7.7.6"/>
    </reaction>
</comment>
<comment type="subunit">
    <text evidence="1">The RNAP catalytic core consists of 2 alpha, 1 beta, 1 beta' and 1 omega subunit. When a sigma factor is associated with the core the holoenzyme is formed, which can initiate transcription.</text>
</comment>
<comment type="similarity">
    <text evidence="1">Belongs to the RNA polymerase beta chain family.</text>
</comment>
<gene>
    <name evidence="1" type="primary">rpoB</name>
    <name type="ordered locus">SPO3508</name>
</gene>
<accession>Q5LMQ5</accession>
<keyword id="KW-0240">DNA-directed RNA polymerase</keyword>
<keyword id="KW-0548">Nucleotidyltransferase</keyword>
<keyword id="KW-1185">Reference proteome</keyword>
<keyword id="KW-0804">Transcription</keyword>
<keyword id="KW-0808">Transferase</keyword>
<evidence type="ECO:0000255" key="1">
    <source>
        <dbReference type="HAMAP-Rule" id="MF_01321"/>
    </source>
</evidence>
<name>RPOB_RUEPO</name>
<reference key="1">
    <citation type="journal article" date="2004" name="Nature">
        <title>Genome sequence of Silicibacter pomeroyi reveals adaptations to the marine environment.</title>
        <authorList>
            <person name="Moran M.A."/>
            <person name="Buchan A."/>
            <person name="Gonzalez J.M."/>
            <person name="Heidelberg J.F."/>
            <person name="Whitman W.B."/>
            <person name="Kiene R.P."/>
            <person name="Henriksen J.R."/>
            <person name="King G.M."/>
            <person name="Belas R."/>
            <person name="Fuqua C."/>
            <person name="Brinkac L.M."/>
            <person name="Lewis M."/>
            <person name="Johri S."/>
            <person name="Weaver B."/>
            <person name="Pai G."/>
            <person name="Eisen J.A."/>
            <person name="Rahe E."/>
            <person name="Sheldon W.M."/>
            <person name="Ye W."/>
            <person name="Miller T.R."/>
            <person name="Carlton J."/>
            <person name="Rasko D.A."/>
            <person name="Paulsen I.T."/>
            <person name="Ren Q."/>
            <person name="Daugherty S.C."/>
            <person name="DeBoy R.T."/>
            <person name="Dodson R.J."/>
            <person name="Durkin A.S."/>
            <person name="Madupu R."/>
            <person name="Nelson W.C."/>
            <person name="Sullivan S.A."/>
            <person name="Rosovitz M.J."/>
            <person name="Haft D.H."/>
            <person name="Selengut J."/>
            <person name="Ward N."/>
        </authorList>
    </citation>
    <scope>NUCLEOTIDE SEQUENCE [LARGE SCALE GENOMIC DNA]</scope>
    <source>
        <strain>ATCC 700808 / DSM 15171 / DSS-3</strain>
    </source>
</reference>
<reference key="2">
    <citation type="journal article" date="2014" name="Stand. Genomic Sci.">
        <title>An updated genome annotation for the model marine bacterium Ruegeria pomeroyi DSS-3.</title>
        <authorList>
            <person name="Rivers A.R."/>
            <person name="Smith C.B."/>
            <person name="Moran M.A."/>
        </authorList>
    </citation>
    <scope>GENOME REANNOTATION</scope>
    <source>
        <strain>ATCC 700808 / DSM 15171 / DSS-3</strain>
    </source>
</reference>
<organism>
    <name type="scientific">Ruegeria pomeroyi (strain ATCC 700808 / DSM 15171 / DSS-3)</name>
    <name type="common">Silicibacter pomeroyi</name>
    <dbReference type="NCBI Taxonomy" id="246200"/>
    <lineage>
        <taxon>Bacteria</taxon>
        <taxon>Pseudomonadati</taxon>
        <taxon>Pseudomonadota</taxon>
        <taxon>Alphaproteobacteria</taxon>
        <taxon>Rhodobacterales</taxon>
        <taxon>Roseobacteraceae</taxon>
        <taxon>Ruegeria</taxon>
    </lineage>
</organism>
<dbReference type="EC" id="2.7.7.6" evidence="1"/>
<dbReference type="EMBL" id="CP000031">
    <property type="protein sequence ID" value="AAV96733.1"/>
    <property type="molecule type" value="Genomic_DNA"/>
</dbReference>
<dbReference type="RefSeq" id="WP_011049188.1">
    <property type="nucleotide sequence ID" value="NC_003911.12"/>
</dbReference>
<dbReference type="SMR" id="Q5LMQ5"/>
<dbReference type="STRING" id="246200.SPO3508"/>
<dbReference type="PaxDb" id="246200-SPO3508"/>
<dbReference type="KEGG" id="sil:SPO3508"/>
<dbReference type="eggNOG" id="COG0085">
    <property type="taxonomic scope" value="Bacteria"/>
</dbReference>
<dbReference type="HOGENOM" id="CLU_000524_4_0_5"/>
<dbReference type="OrthoDB" id="9803954at2"/>
<dbReference type="Proteomes" id="UP000001023">
    <property type="component" value="Chromosome"/>
</dbReference>
<dbReference type="GO" id="GO:0000428">
    <property type="term" value="C:DNA-directed RNA polymerase complex"/>
    <property type="evidence" value="ECO:0007669"/>
    <property type="project" value="UniProtKB-KW"/>
</dbReference>
<dbReference type="GO" id="GO:0003677">
    <property type="term" value="F:DNA binding"/>
    <property type="evidence" value="ECO:0007669"/>
    <property type="project" value="UniProtKB-UniRule"/>
</dbReference>
<dbReference type="GO" id="GO:0003899">
    <property type="term" value="F:DNA-directed RNA polymerase activity"/>
    <property type="evidence" value="ECO:0007669"/>
    <property type="project" value="UniProtKB-UniRule"/>
</dbReference>
<dbReference type="GO" id="GO:0032549">
    <property type="term" value="F:ribonucleoside binding"/>
    <property type="evidence" value="ECO:0007669"/>
    <property type="project" value="InterPro"/>
</dbReference>
<dbReference type="GO" id="GO:0006351">
    <property type="term" value="P:DNA-templated transcription"/>
    <property type="evidence" value="ECO:0007669"/>
    <property type="project" value="UniProtKB-UniRule"/>
</dbReference>
<dbReference type="CDD" id="cd00653">
    <property type="entry name" value="RNA_pol_B_RPB2"/>
    <property type="match status" value="1"/>
</dbReference>
<dbReference type="FunFam" id="2.40.50.100:FF:000006">
    <property type="entry name" value="DNA-directed RNA polymerase subunit beta"/>
    <property type="match status" value="1"/>
</dbReference>
<dbReference type="FunFam" id="3.90.1800.10:FF:000001">
    <property type="entry name" value="DNA-directed RNA polymerase subunit beta"/>
    <property type="match status" value="1"/>
</dbReference>
<dbReference type="Gene3D" id="2.40.50.100">
    <property type="match status" value="1"/>
</dbReference>
<dbReference type="Gene3D" id="2.40.50.150">
    <property type="match status" value="1"/>
</dbReference>
<dbReference type="Gene3D" id="3.90.1100.10">
    <property type="match status" value="2"/>
</dbReference>
<dbReference type="Gene3D" id="6.10.140.1670">
    <property type="match status" value="1"/>
</dbReference>
<dbReference type="Gene3D" id="2.30.150.10">
    <property type="entry name" value="DNA-directed RNA polymerase, beta subunit, external 1 domain"/>
    <property type="match status" value="1"/>
</dbReference>
<dbReference type="Gene3D" id="2.40.270.10">
    <property type="entry name" value="DNA-directed RNA polymerase, subunit 2, domain 6"/>
    <property type="match status" value="1"/>
</dbReference>
<dbReference type="Gene3D" id="3.90.1800.10">
    <property type="entry name" value="RNA polymerase alpha subunit dimerisation domain"/>
    <property type="match status" value="1"/>
</dbReference>
<dbReference type="Gene3D" id="3.90.1110.10">
    <property type="entry name" value="RNA polymerase Rpb2, domain 2"/>
    <property type="match status" value="1"/>
</dbReference>
<dbReference type="HAMAP" id="MF_01321">
    <property type="entry name" value="RNApol_bact_RpoB"/>
    <property type="match status" value="1"/>
</dbReference>
<dbReference type="InterPro" id="IPR042107">
    <property type="entry name" value="DNA-dir_RNA_pol_bsu_ext_1_sf"/>
</dbReference>
<dbReference type="InterPro" id="IPR019462">
    <property type="entry name" value="DNA-dir_RNA_pol_bsu_external_1"/>
</dbReference>
<dbReference type="InterPro" id="IPR015712">
    <property type="entry name" value="DNA-dir_RNA_pol_su2"/>
</dbReference>
<dbReference type="InterPro" id="IPR007120">
    <property type="entry name" value="DNA-dir_RNAP_su2_dom"/>
</dbReference>
<dbReference type="InterPro" id="IPR037033">
    <property type="entry name" value="DNA-dir_RNAP_su2_hyb_sf"/>
</dbReference>
<dbReference type="InterPro" id="IPR010243">
    <property type="entry name" value="RNA_pol_bsu_bac"/>
</dbReference>
<dbReference type="InterPro" id="IPR007121">
    <property type="entry name" value="RNA_pol_bsu_CS"/>
</dbReference>
<dbReference type="InterPro" id="IPR007644">
    <property type="entry name" value="RNA_pol_bsu_protrusion"/>
</dbReference>
<dbReference type="InterPro" id="IPR007642">
    <property type="entry name" value="RNA_pol_Rpb2_2"/>
</dbReference>
<dbReference type="InterPro" id="IPR037034">
    <property type="entry name" value="RNA_pol_Rpb2_2_sf"/>
</dbReference>
<dbReference type="InterPro" id="IPR007645">
    <property type="entry name" value="RNA_pol_Rpb2_3"/>
</dbReference>
<dbReference type="InterPro" id="IPR007641">
    <property type="entry name" value="RNA_pol_Rpb2_7"/>
</dbReference>
<dbReference type="InterPro" id="IPR014724">
    <property type="entry name" value="RNA_pol_RPB2_OB-fold"/>
</dbReference>
<dbReference type="NCBIfam" id="NF001616">
    <property type="entry name" value="PRK00405.1"/>
    <property type="match status" value="1"/>
</dbReference>
<dbReference type="NCBIfam" id="TIGR02013">
    <property type="entry name" value="rpoB"/>
    <property type="match status" value="1"/>
</dbReference>
<dbReference type="PANTHER" id="PTHR20856">
    <property type="entry name" value="DNA-DIRECTED RNA POLYMERASE I SUBUNIT 2"/>
    <property type="match status" value="1"/>
</dbReference>
<dbReference type="Pfam" id="PF04563">
    <property type="entry name" value="RNA_pol_Rpb2_1"/>
    <property type="match status" value="1"/>
</dbReference>
<dbReference type="Pfam" id="PF04561">
    <property type="entry name" value="RNA_pol_Rpb2_2"/>
    <property type="match status" value="2"/>
</dbReference>
<dbReference type="Pfam" id="PF04565">
    <property type="entry name" value="RNA_pol_Rpb2_3"/>
    <property type="match status" value="1"/>
</dbReference>
<dbReference type="Pfam" id="PF10385">
    <property type="entry name" value="RNA_pol_Rpb2_45"/>
    <property type="match status" value="1"/>
</dbReference>
<dbReference type="Pfam" id="PF00562">
    <property type="entry name" value="RNA_pol_Rpb2_6"/>
    <property type="match status" value="1"/>
</dbReference>
<dbReference type="Pfam" id="PF04560">
    <property type="entry name" value="RNA_pol_Rpb2_7"/>
    <property type="match status" value="1"/>
</dbReference>
<dbReference type="SUPFAM" id="SSF64484">
    <property type="entry name" value="beta and beta-prime subunits of DNA dependent RNA-polymerase"/>
    <property type="match status" value="1"/>
</dbReference>
<dbReference type="PROSITE" id="PS01166">
    <property type="entry name" value="RNA_POL_BETA"/>
    <property type="match status" value="1"/>
</dbReference>
<sequence>MAQTFLGQKRLRKYYGKIREVLEMPNLIEVQKSSYDLFLNSGDAPQPLDGEGIMGVFQSVFPIKDFNETSVLEFVKYELEKPKYDVEECMQRDMTYSAPLKVTLRLIVFDVDEDTGAKSVKDIKEQDVFMGDMPLMTPNGTFIVNGTERVIVSQMHRSPGVFFDHDKGKTHSSGKLLFACRIIPYRGSWLDFEFDAKDIVFARIDRRRKLPVTTLLYALGLDQEGIMDAYFKTVSYRLEKKRGWVTPFFPERVRGTRPTYDLIDAASGEVIAEAGKKVTPRAVKKLIEEGSVTDLLVPFDHIVGKFAAKDIINEETGAIYVEAGDELTLEYDKDGDLIGGTVKELIDNGVTNIPVLDIDNINVGPYIRNTMAQDKNMNRETALMDIYRVMRPGEPPTVEAASALFDTLFFDSERYDLSAVGRVKMNMRLDLDAADTQRTLRREDIIACIKALVELRDGKGDIDDIDHLGNRRVRSVGELMENQYRVGLLRMERAIKERMSSVEIDTVMPQDLINAKPAAAAVREFFGSSQLSQFMDQTNPLSEVTHKRRLSALGPGGLTRERAGFEVRDVHPTHYGRMCPIETPEGPNIGLINSLATFARVNKYGFIETPYRVVKGGQVTDEVHYMSATEEMRHTVAQANATLDENGKFVNELVNTRQAGDYTLAPMESVDLIDVSPKQLVSVAASLIPFLENDDANRALMGSNMQRQAVPLLRAEAPLVGTGIEEKVAIDSGAAIQAKRAGIIDQIDAQRIVIRATEDLELGDAGVDIYRMRKFQRSNQNTCINQRPLVKVGQQVSKGEVIADGPSTDMGELALGKNVVVAFMPWNGYNYEDSILISERIARDDVFTSIHIEEFEVAARDTKLGPEEITRDIPNVGEEALRNLDEAGIVYIGAEVQPGDILVGKITPKGESPMTPEEKLLRAIFGEKASDVRDTSLRVKPGDYGTVVEVRVFNRHGVDKDERALQIEREEVERLARDRDDELAILDRNIYARLKSLILGKTAVKGPKGIKPGSEITEELLETLTRGQWWMLALEGEQDAQIVEALNEQYELQKRALDARFEDKVEKVRRGDDLPPGVMKMVKVFIAVKRKLQPGDKMAGRHGNKGVISKVVPMEDMPFLADGTPVDFCLNPLGVPSRMNVGQILETHMGWAARGLGLNVDEALQEYRRSGDLTPVRDAMKHAYGEDVYAEGISGMDEDTLVEAAGNVTRGVPIATPVFDGAKEADVNDALTRAGFDTSGQSVLFDGRTGEQFARPVTVGIKYLLKLHHLVDDKIHARSTGPYSLVTQQPLGGKAQFGGQRFGEMEVWALEAYGAAYTLQEMLTVKSDDVAGRTKVYESIVKGEDNFEAGIPESFNVLVKEVRGLGLNMELLDAEVEE</sequence>
<proteinExistence type="inferred from homology"/>
<protein>
    <recommendedName>
        <fullName evidence="1">DNA-directed RNA polymerase subunit beta</fullName>
        <shortName evidence="1">RNAP subunit beta</shortName>
        <ecNumber evidence="1">2.7.7.6</ecNumber>
    </recommendedName>
    <alternativeName>
        <fullName evidence="1">RNA polymerase subunit beta</fullName>
    </alternativeName>
    <alternativeName>
        <fullName evidence="1">Transcriptase subunit beta</fullName>
    </alternativeName>
</protein>
<feature type="chain" id="PRO_0000224108" description="DNA-directed RNA polymerase subunit beta">
    <location>
        <begin position="1"/>
        <end position="1378"/>
    </location>
</feature>